<name>IOVO_STRCA</name>
<accession>P05557</accession>
<dbReference type="PIR" id="B31444">
    <property type="entry name" value="B31444"/>
</dbReference>
<dbReference type="SMR" id="P05557"/>
<dbReference type="Allergome" id="2103">
    <property type="allergen name" value="Str c 1"/>
</dbReference>
<dbReference type="GO" id="GO:0005576">
    <property type="term" value="C:extracellular region"/>
    <property type="evidence" value="ECO:0007669"/>
    <property type="project" value="UniProtKB-SubCell"/>
</dbReference>
<dbReference type="GO" id="GO:0004867">
    <property type="term" value="F:serine-type endopeptidase inhibitor activity"/>
    <property type="evidence" value="ECO:0007669"/>
    <property type="project" value="UniProtKB-KW"/>
</dbReference>
<dbReference type="CDD" id="cd00104">
    <property type="entry name" value="KAZAL_FS"/>
    <property type="match status" value="1"/>
</dbReference>
<dbReference type="FunFam" id="3.30.60.30:FF:000037">
    <property type="entry name" value="Ovomucoid"/>
    <property type="match status" value="1"/>
</dbReference>
<dbReference type="Gene3D" id="3.30.60.30">
    <property type="match status" value="1"/>
</dbReference>
<dbReference type="InterPro" id="IPR051597">
    <property type="entry name" value="Bifunctional_prot_inhibitor"/>
</dbReference>
<dbReference type="InterPro" id="IPR002350">
    <property type="entry name" value="Kazal_dom"/>
</dbReference>
<dbReference type="InterPro" id="IPR036058">
    <property type="entry name" value="Kazal_dom_sf"/>
</dbReference>
<dbReference type="InterPro" id="IPR001239">
    <property type="entry name" value="Prot_inh_Kazal-m"/>
</dbReference>
<dbReference type="PANTHER" id="PTHR47729:SF1">
    <property type="entry name" value="OVOMUCOID-LIKE-RELATED"/>
    <property type="match status" value="1"/>
</dbReference>
<dbReference type="PANTHER" id="PTHR47729">
    <property type="entry name" value="SERINE PEPTIDASE INHIBITOR, KAZAL TYPE 2, TANDEM DUPLICATE 1-RELATED"/>
    <property type="match status" value="1"/>
</dbReference>
<dbReference type="Pfam" id="PF00050">
    <property type="entry name" value="Kazal_1"/>
    <property type="match status" value="1"/>
</dbReference>
<dbReference type="PRINTS" id="PR00290">
    <property type="entry name" value="KAZALINHBTR"/>
</dbReference>
<dbReference type="SMART" id="SM00280">
    <property type="entry name" value="KAZAL"/>
    <property type="match status" value="1"/>
</dbReference>
<dbReference type="SUPFAM" id="SSF100895">
    <property type="entry name" value="Kazal-type serine protease inhibitors"/>
    <property type="match status" value="1"/>
</dbReference>
<dbReference type="PROSITE" id="PS00282">
    <property type="entry name" value="KAZAL_1"/>
    <property type="match status" value="1"/>
</dbReference>
<dbReference type="PROSITE" id="PS51465">
    <property type="entry name" value="KAZAL_2"/>
    <property type="match status" value="1"/>
</dbReference>
<sequence>FATVDCSDYPKPVCPLDYMPLCGSDSKTYSNKCNFCNAVVESSGTLTLRHFGKC</sequence>
<feature type="chain" id="PRO_0000073179" description="Ovomucoid">
    <location>
        <begin position="1" status="less than"/>
        <end position="54" status="greater than"/>
    </location>
</feature>
<feature type="domain" description="Kazal-like" evidence="1">
    <location>
        <begin position="4"/>
        <end position="54"/>
    </location>
</feature>
<feature type="site" description="Reactive bond 3">
    <location>
        <begin position="16"/>
        <end position="17"/>
    </location>
</feature>
<feature type="disulfide bond">
    <location>
        <begin position="6"/>
        <end position="36"/>
    </location>
</feature>
<feature type="disulfide bond">
    <location>
        <begin position="14"/>
        <end position="33"/>
    </location>
</feature>
<feature type="disulfide bond">
    <location>
        <begin position="22"/>
        <end position="54"/>
    </location>
</feature>
<feature type="non-terminal residue">
    <location>
        <position position="1"/>
    </location>
</feature>
<feature type="non-terminal residue">
    <location>
        <position position="54"/>
    </location>
</feature>
<proteinExistence type="evidence at protein level"/>
<evidence type="ECO:0000255" key="1">
    <source>
        <dbReference type="PROSITE-ProRule" id="PRU00798"/>
    </source>
</evidence>
<keyword id="KW-0903">Direct protein sequencing</keyword>
<keyword id="KW-1015">Disulfide bond</keyword>
<keyword id="KW-0646">Protease inhibitor</keyword>
<keyword id="KW-0677">Repeat</keyword>
<keyword id="KW-0964">Secreted</keyword>
<keyword id="KW-0722">Serine protease inhibitor</keyword>
<reference key="1">
    <citation type="journal article" date="1987" name="Biochemistry">
        <title>Ovomucoid third domains from 100 avian species: isolation, sequences, and hypervariability of enzyme-inhibitor contact residues.</title>
        <authorList>
            <person name="Laskowski M. Jr."/>
            <person name="Kato I."/>
            <person name="Ardelt W."/>
            <person name="Cook J."/>
            <person name="Denton A."/>
            <person name="Empie M.W."/>
            <person name="Kohr W.J."/>
            <person name="Park S.J."/>
            <person name="Parks K."/>
            <person name="Schatzley B.L."/>
            <person name="Schoenberger O.L."/>
            <person name="Tashiro M."/>
            <person name="Vichot G."/>
            <person name="Whatley H.E."/>
            <person name="Wieczorek A."/>
            <person name="Wieczorek M."/>
        </authorList>
    </citation>
    <scope>PROTEIN SEQUENCE</scope>
</reference>
<comment type="subcellular location">
    <subcellularLocation>
        <location>Secreted</location>
    </subcellularLocation>
</comment>
<comment type="domain">
    <text>Avian ovomucoid consists of three homologous, tandem Kazal family inhibitory domains.</text>
</comment>
<comment type="PTM">
    <text>This is the only ovomucoid third domain known to be not glycosylated.</text>
</comment>
<organism>
    <name type="scientific">Struthio camelus</name>
    <name type="common">Common ostrich</name>
    <dbReference type="NCBI Taxonomy" id="8801"/>
    <lineage>
        <taxon>Eukaryota</taxon>
        <taxon>Metazoa</taxon>
        <taxon>Chordata</taxon>
        <taxon>Craniata</taxon>
        <taxon>Vertebrata</taxon>
        <taxon>Euteleostomi</taxon>
        <taxon>Archelosauria</taxon>
        <taxon>Archosauria</taxon>
        <taxon>Dinosauria</taxon>
        <taxon>Saurischia</taxon>
        <taxon>Theropoda</taxon>
        <taxon>Coelurosauria</taxon>
        <taxon>Aves</taxon>
        <taxon>Palaeognathae</taxon>
        <taxon>Struthioniformes</taxon>
        <taxon>Struthionidae</taxon>
        <taxon>Struthio</taxon>
    </lineage>
</organism>
<protein>
    <recommendedName>
        <fullName>Ovomucoid</fullName>
    </recommendedName>
</protein>